<protein>
    <recommendedName>
        <fullName evidence="1">DNA protection during starvation protein</fullName>
        <ecNumber evidence="1">1.16.-.-</ecNumber>
    </recommendedName>
</protein>
<reference key="1">
    <citation type="journal article" date="2008" name="J. Bacteriol.">
        <title>The complete genome sequence of Escherichia coli DH10B: insights into the biology of a laboratory workhorse.</title>
        <authorList>
            <person name="Durfee T."/>
            <person name="Nelson R."/>
            <person name="Baldwin S."/>
            <person name="Plunkett G. III"/>
            <person name="Burland V."/>
            <person name="Mau B."/>
            <person name="Petrosino J.F."/>
            <person name="Qin X."/>
            <person name="Muzny D.M."/>
            <person name="Ayele M."/>
            <person name="Gibbs R.A."/>
            <person name="Csorgo B."/>
            <person name="Posfai G."/>
            <person name="Weinstock G.M."/>
            <person name="Blattner F.R."/>
        </authorList>
    </citation>
    <scope>NUCLEOTIDE SEQUENCE [LARGE SCALE GENOMIC DNA]</scope>
    <source>
        <strain>K12 / DH10B</strain>
    </source>
</reference>
<accession>B1X7E2</accession>
<comment type="function">
    <text evidence="1">During stationary phase, binds the chromosome non-specifically, forming a highly ordered and stable dps-DNA co-crystal within which chromosomal DNA is condensed and protected from diverse damages. It protects DNA from oxidative damage by sequestering intracellular Fe(2+) ion and storing it in the form of Fe(3+) oxyhydroxide mineral, which can be released after reduction. One hydrogen peroxide oxidizes two Fe(2+) ions, which prevents hydroxyl radical production by the Fenton reaction. Dps also protects the cell from UV and gamma irradiation, iron and copper toxicity, thermal stress and acid and base shocks. Also shows a weak catalase activity.</text>
</comment>
<comment type="catalytic activity">
    <reaction evidence="1">
        <text>2 Fe(2+) + H2O2 + 2 H(+) = 2 Fe(3+) + 2 H2O</text>
        <dbReference type="Rhea" id="RHEA:48712"/>
        <dbReference type="ChEBI" id="CHEBI:15377"/>
        <dbReference type="ChEBI" id="CHEBI:15378"/>
        <dbReference type="ChEBI" id="CHEBI:16240"/>
        <dbReference type="ChEBI" id="CHEBI:29033"/>
        <dbReference type="ChEBI" id="CHEBI:29034"/>
    </reaction>
</comment>
<comment type="subunit">
    <text evidence="1">Homododecamer. The 12 subunits form a hollow sphere into which the mineral iron core of up to 500 Fe(3+) can be deposited.</text>
</comment>
<comment type="subcellular location">
    <subcellularLocation>
        <location evidence="1">Cytoplasm</location>
        <location evidence="1">Nucleoid</location>
    </subcellularLocation>
</comment>
<comment type="similarity">
    <text evidence="1">Belongs to the Dps family.</text>
</comment>
<proteinExistence type="inferred from homology"/>
<feature type="chain" id="PRO_1000145902" description="DNA protection during starvation protein">
    <location>
        <begin position="1"/>
        <end position="167"/>
    </location>
</feature>
<feature type="binding site" evidence="1">
    <location>
        <position position="51"/>
    </location>
    <ligand>
        <name>Fe cation</name>
        <dbReference type="ChEBI" id="CHEBI:24875"/>
        <label>1</label>
        <note>ligand shared between two neighboring subunits</note>
    </ligand>
</feature>
<feature type="binding site" description="in other chain" evidence="1">
    <location>
        <position position="78"/>
    </location>
    <ligand>
        <name>Fe cation</name>
        <dbReference type="ChEBI" id="CHEBI:24875"/>
        <label>1</label>
        <note>ligand shared between two neighboring subunits</note>
    </ligand>
</feature>
<feature type="binding site" description="in other chain" evidence="1">
    <location>
        <position position="82"/>
    </location>
    <ligand>
        <name>Fe cation</name>
        <dbReference type="ChEBI" id="CHEBI:24875"/>
        <label>1</label>
        <note>ligand shared between two neighboring subunits</note>
    </ligand>
</feature>
<feature type="binding site" evidence="1">
    <location>
        <position position="82"/>
    </location>
    <ligand>
        <name>Fe cation</name>
        <dbReference type="ChEBI" id="CHEBI:24875"/>
        <label>2</label>
    </ligand>
</feature>
<sequence>MSTAKLVKSKATNLLYTRNDVSDSEKKATVELLNRQVIQFIDLSLITKQAHWNMRGANFIAVHEMLDGFRTALIDHLDTMAERAVQLGGVALGTTQVINSKTPLKSYPLDIHNVQDHLKELADRYAIVANDVRKAIGEAKDDDTADILTAASRDLDKFLWFIESNIE</sequence>
<evidence type="ECO:0000255" key="1">
    <source>
        <dbReference type="HAMAP-Rule" id="MF_01441"/>
    </source>
</evidence>
<keyword id="KW-0963">Cytoplasm</keyword>
<keyword id="KW-0226">DNA condensation</keyword>
<keyword id="KW-0238">DNA-binding</keyword>
<keyword id="KW-0408">Iron</keyword>
<keyword id="KW-0409">Iron storage</keyword>
<keyword id="KW-0479">Metal-binding</keyword>
<keyword id="KW-0560">Oxidoreductase</keyword>
<gene>
    <name evidence="1" type="primary">dps</name>
    <name type="ordered locus">ECDH10B_0880</name>
</gene>
<name>DPS_ECODH</name>
<organism>
    <name type="scientific">Escherichia coli (strain K12 / DH10B)</name>
    <dbReference type="NCBI Taxonomy" id="316385"/>
    <lineage>
        <taxon>Bacteria</taxon>
        <taxon>Pseudomonadati</taxon>
        <taxon>Pseudomonadota</taxon>
        <taxon>Gammaproteobacteria</taxon>
        <taxon>Enterobacterales</taxon>
        <taxon>Enterobacteriaceae</taxon>
        <taxon>Escherichia</taxon>
    </lineage>
</organism>
<dbReference type="EC" id="1.16.-.-" evidence="1"/>
<dbReference type="EMBL" id="CP000948">
    <property type="protein sequence ID" value="ACB02013.1"/>
    <property type="molecule type" value="Genomic_DNA"/>
</dbReference>
<dbReference type="RefSeq" id="WP_000100800.1">
    <property type="nucleotide sequence ID" value="NC_010473.1"/>
</dbReference>
<dbReference type="SMR" id="B1X7E2"/>
<dbReference type="GeneID" id="93776616"/>
<dbReference type="KEGG" id="ecd:ECDH10B_0880"/>
<dbReference type="HOGENOM" id="CLU_098183_1_2_6"/>
<dbReference type="GO" id="GO:0005737">
    <property type="term" value="C:cytoplasm"/>
    <property type="evidence" value="ECO:0007669"/>
    <property type="project" value="UniProtKB-UniRule"/>
</dbReference>
<dbReference type="GO" id="GO:0009295">
    <property type="term" value="C:nucleoid"/>
    <property type="evidence" value="ECO:0007669"/>
    <property type="project" value="UniProtKB-SubCell"/>
</dbReference>
<dbReference type="GO" id="GO:0003677">
    <property type="term" value="F:DNA binding"/>
    <property type="evidence" value="ECO:0007669"/>
    <property type="project" value="UniProtKB-UniRule"/>
</dbReference>
<dbReference type="GO" id="GO:0008199">
    <property type="term" value="F:ferric iron binding"/>
    <property type="evidence" value="ECO:0007669"/>
    <property type="project" value="UniProtKB-UniRule"/>
</dbReference>
<dbReference type="GO" id="GO:0016722">
    <property type="term" value="F:oxidoreductase activity, acting on metal ions"/>
    <property type="evidence" value="ECO:0007669"/>
    <property type="project" value="InterPro"/>
</dbReference>
<dbReference type="GO" id="GO:0030261">
    <property type="term" value="P:chromosome condensation"/>
    <property type="evidence" value="ECO:0007669"/>
    <property type="project" value="UniProtKB-KW"/>
</dbReference>
<dbReference type="GO" id="GO:0006879">
    <property type="term" value="P:intracellular iron ion homeostasis"/>
    <property type="evidence" value="ECO:0007669"/>
    <property type="project" value="UniProtKB-KW"/>
</dbReference>
<dbReference type="CDD" id="cd01043">
    <property type="entry name" value="DPS"/>
    <property type="match status" value="1"/>
</dbReference>
<dbReference type="FunFam" id="1.20.1260.10:FF:000003">
    <property type="entry name" value="DNA protection during starvation protein"/>
    <property type="match status" value="1"/>
</dbReference>
<dbReference type="Gene3D" id="1.20.1260.10">
    <property type="match status" value="1"/>
</dbReference>
<dbReference type="HAMAP" id="MF_01441">
    <property type="entry name" value="Dps"/>
    <property type="match status" value="1"/>
</dbReference>
<dbReference type="InterPro" id="IPR002177">
    <property type="entry name" value="DPS_DNA-bd"/>
</dbReference>
<dbReference type="InterPro" id="IPR023188">
    <property type="entry name" value="DPS_DNA-bd_CS"/>
</dbReference>
<dbReference type="InterPro" id="IPR023067">
    <property type="entry name" value="Dps_gammaproteobac"/>
</dbReference>
<dbReference type="InterPro" id="IPR012347">
    <property type="entry name" value="Ferritin-like"/>
</dbReference>
<dbReference type="InterPro" id="IPR009078">
    <property type="entry name" value="Ferritin-like_SF"/>
</dbReference>
<dbReference type="InterPro" id="IPR008331">
    <property type="entry name" value="Ferritin_DPS_dom"/>
</dbReference>
<dbReference type="NCBIfam" id="NF006975">
    <property type="entry name" value="PRK09448.1"/>
    <property type="match status" value="1"/>
</dbReference>
<dbReference type="PANTHER" id="PTHR42932:SF3">
    <property type="entry name" value="DNA PROTECTION DURING STARVATION PROTEIN"/>
    <property type="match status" value="1"/>
</dbReference>
<dbReference type="PANTHER" id="PTHR42932">
    <property type="entry name" value="GENERAL STRESS PROTEIN 20U"/>
    <property type="match status" value="1"/>
</dbReference>
<dbReference type="Pfam" id="PF00210">
    <property type="entry name" value="Ferritin"/>
    <property type="match status" value="1"/>
</dbReference>
<dbReference type="PIRSF" id="PIRSF005900">
    <property type="entry name" value="Dps"/>
    <property type="match status" value="1"/>
</dbReference>
<dbReference type="PRINTS" id="PR01346">
    <property type="entry name" value="HELNAPAPROT"/>
</dbReference>
<dbReference type="SUPFAM" id="SSF47240">
    <property type="entry name" value="Ferritin-like"/>
    <property type="match status" value="1"/>
</dbReference>
<dbReference type="PROSITE" id="PS00818">
    <property type="entry name" value="DPS_1"/>
    <property type="match status" value="1"/>
</dbReference>
<dbReference type="PROSITE" id="PS00819">
    <property type="entry name" value="DPS_2"/>
    <property type="match status" value="1"/>
</dbReference>